<dbReference type="EMBL" id="AF107315">
    <property type="protein sequence ID" value="AAD09114.1"/>
    <property type="molecule type" value="mRNA"/>
</dbReference>
<dbReference type="GO" id="GO:0005615">
    <property type="term" value="C:extracellular space"/>
    <property type="evidence" value="ECO:0000250"/>
    <property type="project" value="UniProtKB"/>
</dbReference>
<dbReference type="GO" id="GO:0005183">
    <property type="term" value="F:gonadotropin hormone-releasing hormone activity"/>
    <property type="evidence" value="ECO:0007669"/>
    <property type="project" value="TreeGrafter"/>
</dbReference>
<dbReference type="GO" id="GO:0031530">
    <property type="term" value="F:gonadotropin-releasing hormone receptor binding"/>
    <property type="evidence" value="ECO:0007669"/>
    <property type="project" value="TreeGrafter"/>
</dbReference>
<dbReference type="InterPro" id="IPR002012">
    <property type="entry name" value="GnRH"/>
</dbReference>
<dbReference type="InterPro" id="IPR019792">
    <property type="entry name" value="Gonadoliberin"/>
</dbReference>
<dbReference type="PANTHER" id="PTHR10522">
    <property type="entry name" value="GONADOLIBERIN"/>
    <property type="match status" value="1"/>
</dbReference>
<dbReference type="PANTHER" id="PTHR10522:SF6">
    <property type="entry name" value="PROGONADOLIBERIN-2"/>
    <property type="match status" value="1"/>
</dbReference>
<dbReference type="Pfam" id="PF00446">
    <property type="entry name" value="GnRH"/>
    <property type="match status" value="1"/>
</dbReference>
<dbReference type="PROSITE" id="PS00473">
    <property type="entry name" value="GNRH"/>
    <property type="match status" value="1"/>
</dbReference>
<protein>
    <recommendedName>
        <fullName>Progonadoliberin-2</fullName>
    </recommendedName>
    <alternativeName>
        <fullName>Progonadoliberin II</fullName>
    </alternativeName>
    <component>
        <recommendedName>
            <fullName>Gonadoliberin-2</fullName>
        </recommendedName>
        <alternativeName>
            <fullName>Gonadoliberin II</fullName>
        </alternativeName>
        <alternativeName>
            <fullName>Gonadotropin-releasing hormone II</fullName>
            <shortName>GnRH II</shortName>
        </alternativeName>
        <alternativeName>
            <fullName>Luliberin II</fullName>
        </alternativeName>
        <alternativeName>
            <fullName>Luteinizing hormone-releasing hormone II</fullName>
            <shortName>LH-RH II</shortName>
        </alternativeName>
    </component>
    <component>
        <recommendedName>
            <fullName>GnRH-associated peptide 2</fullName>
        </recommendedName>
        <alternativeName>
            <fullName>GnRH-associated peptide II</fullName>
        </alternativeName>
    </component>
</protein>
<keyword id="KW-0027">Amidation</keyword>
<keyword id="KW-0165">Cleavage on pair of basic residues</keyword>
<keyword id="KW-0372">Hormone</keyword>
<keyword id="KW-0964">Secreted</keyword>
<keyword id="KW-0732">Signal</keyword>
<name>GON2_SUNMU</name>
<evidence type="ECO:0000250" key="1"/>
<evidence type="ECO:0000250" key="2">
    <source>
        <dbReference type="UniProtKB" id="P01148"/>
    </source>
</evidence>
<evidence type="ECO:0000256" key="3">
    <source>
        <dbReference type="SAM" id="MobiDB-lite"/>
    </source>
</evidence>
<evidence type="ECO:0000305" key="4"/>
<sequence>MASIGQGLVLLLLLLLLTAQPGPLKAQHWSHGWYPGGKRSPDSPQDPQPAPRFPEGYWLGLAAGNPRQSTQSLPSKALAPPEDTVSEEAKTMAWWHLQKQRLIQTLLPRP</sequence>
<comment type="function">
    <text evidence="1">Stimulates the secretion of gonadotropins; it stimulates the secretion of both luteinizing and follicle-stimulating hormones.</text>
</comment>
<comment type="subcellular location">
    <subcellularLocation>
        <location>Secreted</location>
    </subcellularLocation>
</comment>
<comment type="tissue specificity">
    <text>Midbrain.</text>
</comment>
<comment type="similarity">
    <text evidence="4">Belongs to the GnRH family.</text>
</comment>
<accession>O97686</accession>
<organism>
    <name type="scientific">Suncus murinus</name>
    <name type="common">Asian house shrew</name>
    <name type="synonym">Musk shrew</name>
    <dbReference type="NCBI Taxonomy" id="9378"/>
    <lineage>
        <taxon>Eukaryota</taxon>
        <taxon>Metazoa</taxon>
        <taxon>Chordata</taxon>
        <taxon>Craniata</taxon>
        <taxon>Vertebrata</taxon>
        <taxon>Euteleostomi</taxon>
        <taxon>Mammalia</taxon>
        <taxon>Eutheria</taxon>
        <taxon>Laurasiatheria</taxon>
        <taxon>Eulipotyphla</taxon>
        <taxon>Soricidae</taxon>
        <taxon>Crocidurinae</taxon>
        <taxon>Suncus</taxon>
    </lineage>
</organism>
<gene>
    <name type="primary">GNRH2</name>
</gene>
<reference key="1">
    <citation type="submission" date="1998-11" db="EMBL/GenBank/DDBJ databases">
        <title>GnRH-II cDNA expression in the musk shrew.</title>
        <authorList>
            <person name="White R.B."/>
            <person name="Kasten T.L."/>
            <person name="White S.A."/>
            <person name="Rissman E.F."/>
            <person name="Fernald R.D."/>
        </authorList>
    </citation>
    <scope>NUCLEOTIDE SEQUENCE [MRNA]</scope>
    <source>
        <tissue>Brain</tissue>
    </source>
</reference>
<feature type="signal peptide" evidence="1">
    <location>
        <begin position="1"/>
        <end position="26"/>
    </location>
</feature>
<feature type="chain" id="PRO_0000012462" description="Progonadoliberin-2">
    <location>
        <begin position="27"/>
        <end position="110"/>
    </location>
</feature>
<feature type="peptide" id="PRO_0000012463" description="Gonadoliberin-2">
    <location>
        <begin position="27"/>
        <end position="36"/>
    </location>
</feature>
<feature type="peptide" id="PRO_0000012464" description="GnRH-associated peptide 2">
    <location>
        <begin position="40"/>
        <end position="110"/>
    </location>
</feature>
<feature type="region of interest" description="Disordered" evidence="3">
    <location>
        <begin position="25"/>
        <end position="85"/>
    </location>
</feature>
<feature type="modified residue" description="Glycine amide" evidence="2">
    <location>
        <position position="36"/>
    </location>
</feature>
<proteinExistence type="evidence at transcript level"/>